<evidence type="ECO:0000255" key="1">
    <source>
        <dbReference type="HAMAP-Rule" id="MF_00360"/>
    </source>
</evidence>
<evidence type="ECO:0000305" key="2"/>
<dbReference type="EMBL" id="CP000951">
    <property type="protein sequence ID" value="ACA98451.1"/>
    <property type="molecule type" value="Genomic_DNA"/>
</dbReference>
<dbReference type="RefSeq" id="WP_012306075.1">
    <property type="nucleotide sequence ID" value="NZ_JAHHPU010000001.1"/>
</dbReference>
<dbReference type="SMR" id="B1XP08"/>
<dbReference type="STRING" id="32049.SYNPCC7002_A0443"/>
<dbReference type="KEGG" id="syp:SYNPCC7002_A0443"/>
<dbReference type="eggNOG" id="COG0360">
    <property type="taxonomic scope" value="Bacteria"/>
</dbReference>
<dbReference type="HOGENOM" id="CLU_113441_5_2_3"/>
<dbReference type="Proteomes" id="UP000001688">
    <property type="component" value="Chromosome"/>
</dbReference>
<dbReference type="GO" id="GO:0005737">
    <property type="term" value="C:cytoplasm"/>
    <property type="evidence" value="ECO:0007669"/>
    <property type="project" value="UniProtKB-ARBA"/>
</dbReference>
<dbReference type="GO" id="GO:1990904">
    <property type="term" value="C:ribonucleoprotein complex"/>
    <property type="evidence" value="ECO:0007669"/>
    <property type="project" value="UniProtKB-KW"/>
</dbReference>
<dbReference type="GO" id="GO:0005840">
    <property type="term" value="C:ribosome"/>
    <property type="evidence" value="ECO:0007669"/>
    <property type="project" value="UniProtKB-KW"/>
</dbReference>
<dbReference type="GO" id="GO:0070181">
    <property type="term" value="F:small ribosomal subunit rRNA binding"/>
    <property type="evidence" value="ECO:0007669"/>
    <property type="project" value="TreeGrafter"/>
</dbReference>
<dbReference type="GO" id="GO:0003735">
    <property type="term" value="F:structural constituent of ribosome"/>
    <property type="evidence" value="ECO:0007669"/>
    <property type="project" value="InterPro"/>
</dbReference>
<dbReference type="GO" id="GO:0006412">
    <property type="term" value="P:translation"/>
    <property type="evidence" value="ECO:0007669"/>
    <property type="project" value="UniProtKB-UniRule"/>
</dbReference>
<dbReference type="CDD" id="cd15487">
    <property type="entry name" value="bS6_chloro_cyano"/>
    <property type="match status" value="1"/>
</dbReference>
<dbReference type="Gene3D" id="3.30.70.60">
    <property type="match status" value="1"/>
</dbReference>
<dbReference type="HAMAP" id="MF_00360">
    <property type="entry name" value="Ribosomal_bS6"/>
    <property type="match status" value="1"/>
</dbReference>
<dbReference type="InterPro" id="IPR000529">
    <property type="entry name" value="Ribosomal_bS6"/>
</dbReference>
<dbReference type="InterPro" id="IPR035980">
    <property type="entry name" value="Ribosomal_bS6_sf"/>
</dbReference>
<dbReference type="InterPro" id="IPR020814">
    <property type="entry name" value="Ribosomal_S6_plastid/chlpt"/>
</dbReference>
<dbReference type="InterPro" id="IPR014717">
    <property type="entry name" value="Transl_elong_EF1B/ribsomal_bS6"/>
</dbReference>
<dbReference type="NCBIfam" id="TIGR00166">
    <property type="entry name" value="S6"/>
    <property type="match status" value="1"/>
</dbReference>
<dbReference type="PANTHER" id="PTHR21011">
    <property type="entry name" value="MITOCHONDRIAL 28S RIBOSOMAL PROTEIN S6"/>
    <property type="match status" value="1"/>
</dbReference>
<dbReference type="PANTHER" id="PTHR21011:SF1">
    <property type="entry name" value="SMALL RIBOSOMAL SUBUNIT PROTEIN BS6M"/>
    <property type="match status" value="1"/>
</dbReference>
<dbReference type="Pfam" id="PF01250">
    <property type="entry name" value="Ribosomal_S6"/>
    <property type="match status" value="1"/>
</dbReference>
<dbReference type="SUPFAM" id="SSF54995">
    <property type="entry name" value="Ribosomal protein S6"/>
    <property type="match status" value="1"/>
</dbReference>
<comment type="function">
    <text evidence="1">Binds together with bS18 to 16S ribosomal RNA.</text>
</comment>
<comment type="similarity">
    <text evidence="1">Belongs to the bacterial ribosomal protein bS6 family.</text>
</comment>
<sequence>MSNNYEMMYILRPDLSEEQVQEVSSKYKTMLQDSGASDLQVQVRGKRHLAYPIQNFNDGIYIQVNYKADGSQIKAVERDMRLGEMVIRYLTMKLDAEPIALEADAPPSEPAAPGA</sequence>
<accession>B1XP08</accession>
<organism>
    <name type="scientific">Picosynechococcus sp. (strain ATCC 27264 / PCC 7002 / PR-6)</name>
    <name type="common">Agmenellum quadruplicatum</name>
    <dbReference type="NCBI Taxonomy" id="32049"/>
    <lineage>
        <taxon>Bacteria</taxon>
        <taxon>Bacillati</taxon>
        <taxon>Cyanobacteriota</taxon>
        <taxon>Cyanophyceae</taxon>
        <taxon>Oscillatoriophycideae</taxon>
        <taxon>Chroococcales</taxon>
        <taxon>Geminocystaceae</taxon>
        <taxon>Picosynechococcus</taxon>
    </lineage>
</organism>
<keyword id="KW-1185">Reference proteome</keyword>
<keyword id="KW-0687">Ribonucleoprotein</keyword>
<keyword id="KW-0689">Ribosomal protein</keyword>
<keyword id="KW-0694">RNA-binding</keyword>
<keyword id="KW-0699">rRNA-binding</keyword>
<protein>
    <recommendedName>
        <fullName evidence="1">Small ribosomal subunit protein bS6</fullName>
    </recommendedName>
    <alternativeName>
        <fullName evidence="2">30S ribosomal protein S6</fullName>
    </alternativeName>
</protein>
<gene>
    <name evidence="1" type="primary">rpsF</name>
    <name evidence="1" type="synonym">rps6</name>
    <name type="ordered locus">SYNPCC7002_A0443</name>
</gene>
<feature type="chain" id="PRO_1000120814" description="Small ribosomal subunit protein bS6">
    <location>
        <begin position="1"/>
        <end position="115"/>
    </location>
</feature>
<name>RS6_PICP2</name>
<proteinExistence type="inferred from homology"/>
<reference key="1">
    <citation type="submission" date="2008-02" db="EMBL/GenBank/DDBJ databases">
        <title>Complete sequence of Synechococcus sp. PCC 7002.</title>
        <authorList>
            <person name="Li T."/>
            <person name="Zhao J."/>
            <person name="Zhao C."/>
            <person name="Liu Z."/>
            <person name="Zhao F."/>
            <person name="Marquardt J."/>
            <person name="Nomura C.T."/>
            <person name="Persson S."/>
            <person name="Detter J.C."/>
            <person name="Richardson P.M."/>
            <person name="Lanz C."/>
            <person name="Schuster S.C."/>
            <person name="Wang J."/>
            <person name="Li S."/>
            <person name="Huang X."/>
            <person name="Cai T."/>
            <person name="Yu Z."/>
            <person name="Luo J."/>
            <person name="Zhao J."/>
            <person name="Bryant D.A."/>
        </authorList>
    </citation>
    <scope>NUCLEOTIDE SEQUENCE [LARGE SCALE GENOMIC DNA]</scope>
    <source>
        <strain>ATCC 27264 / PCC 7002 / PR-6</strain>
    </source>
</reference>